<organism>
    <name type="scientific">Bifidobacterium breve (strain ACS-071-V-Sch8b)</name>
    <dbReference type="NCBI Taxonomy" id="866777"/>
    <lineage>
        <taxon>Bacteria</taxon>
        <taxon>Bacillati</taxon>
        <taxon>Actinomycetota</taxon>
        <taxon>Actinomycetes</taxon>
        <taxon>Bifidobacteriales</taxon>
        <taxon>Bifidobacteriaceae</taxon>
        <taxon>Bifidobacterium</taxon>
    </lineage>
</organism>
<name>APY_BIFBA</name>
<feature type="chain" id="PRO_0000422133" description="Exo-alpha-(1-&gt;6)-L-arabinopyranosidase">
    <location>
        <begin position="1"/>
        <end position="757"/>
    </location>
</feature>
<feature type="active site" evidence="1">
    <location>
        <position position="232"/>
    </location>
</feature>
<sequence>MSESTYPSVKDLTLEEKASLTSGGDAWHLQGVESKGIPGYMITDGPHGLRKSLASSAGETDLDDSVPATCFPPAAGLSSSWNPELIHKVGEAMAEECIQEKVAVILGPGVNIKRNPLGGRCFEYWSEDPYLAGHEAIGIVEGVQSKGVGTSLKHFAANNQESDRLRVDARISPRALREIYFPAFEHIVKKAQPWTIMCSYNRINGVHSAQNHWLLTDVLRDEWGFEGIVMSDWGADHDRGASLNAGLNLEMPPSYTDDQIVYAVRDGRITPAQLDRMAQGMIDLVNKTRAAMSIDNYRFDVDAHDEVAHQAAIESIVMLKNDDAILPLNAGPVANPSAMPQKIAVIGEFARTPRYQGGGSSHITPTKMTSFLDTLAERGIKADFAPGFTLDLEPADPALESEAVETAKNADVVLMFLGLPEAAESEGFDRDTLDMPAKQITLLEQVAAANQNVVVVLSNGSVITVAPWAKNAKGILESWLLGQSGGPALADVIFGQVSPSGKLAQSIPLDINDDPSMTNWPGEEGHVDYGEGVFVGYRYYDTYGKAVDCPFGYGLSYATFEITGVAVAKTGANTATVNATVTNTSDVDAAETVQVYVAPGKADVARPKHELKGFTKVFLKSGESKTVTIDLDERAFAYWSEKYNDWHVESGEYAIEVGTSSRDIAETVTVALEGDGKTQPLTEWSTYGEWEADPFGAKIVAAVAAAGEAGELPKLPDNAMMRMFLNSMPINSLPTLLGEGGKKIAQFMVDEYAKLSK</sequence>
<keyword id="KW-0119">Carbohydrate metabolism</keyword>
<keyword id="KW-0378">Hydrolase</keyword>
<protein>
    <recommendedName>
        <fullName>Exo-alpha-(1-&gt;6)-L-arabinopyranosidase</fullName>
        <shortName>APY</shortName>
        <ecNumber>3.2.1.-</ecNumber>
    </recommendedName>
</protein>
<accession>F6C6C1</accession>
<comment type="function">
    <text evidence="2">Catalyzes the hydrolysis of a non-reducing terminal alpha-L-arabinopyranosidic linkage in ginsenoside Rb2 (alpha-L-arabinopyranosyl-(1-&gt;6)-alpha-D-glucopyranosyl) to release alpha-D-glucopyranosyl (Rd). It is not able to hydrolyze alpha-L-arabinofuranosyl-(1-&gt;6)-alpha-D-glucopyranosyl (Rc).</text>
</comment>
<comment type="activity regulation">
    <text evidence="2">Completely inhibited by Cu(2+) and Fe(2+).</text>
</comment>
<comment type="biophysicochemical properties">
    <kinetics>
        <KM evidence="2">0.086 mM for Rb2 (at pH 7 and 37 degrees Celsius)</KM>
        <KM evidence="2">0.16 mM for p-nitrophenyl-alpha-L-arabinopyranoside (pNP-aL-Ap) (at pH 7 and 37 degrees Celsius)</KM>
        <Vmax evidence="2">0.13 umol/min/mg enzyme with Rb2 as substrate (at pH 7 and 37 degrees Celsius)</Vmax>
        <Vmax evidence="2">10.7 umol/min/mg enzyme with pNP-aL-Ap as substrate (at pH 7 and 37 degrees Celsius)</Vmax>
    </kinetics>
    <phDependence>
        <text evidence="2">Optimum pH is between 5.5 and 6.</text>
    </phDependence>
    <temperatureDependence>
        <text evidence="2">Optimum temperature is 40 degrees Celsius.</text>
    </temperatureDependence>
</comment>
<comment type="subunit">
    <text evidence="2">Homotetramer.</text>
</comment>
<comment type="similarity">
    <text evidence="3">Belongs to the glycosyl hydrolase 3 family.</text>
</comment>
<gene>
    <name type="ordered locus">HMPREF9228_1477</name>
</gene>
<dbReference type="EC" id="3.2.1.-"/>
<dbReference type="EMBL" id="CP002743">
    <property type="protein sequence ID" value="AEF27806.1"/>
    <property type="molecule type" value="Genomic_DNA"/>
</dbReference>
<dbReference type="RefSeq" id="WP_014484120.1">
    <property type="nucleotide sequence ID" value="NC_017218.1"/>
</dbReference>
<dbReference type="SMR" id="F6C6C1"/>
<dbReference type="CAZy" id="GH3">
    <property type="family name" value="Glycoside Hydrolase Family 3"/>
</dbReference>
<dbReference type="KEGG" id="bbv:HMPREF9228_1477"/>
<dbReference type="PATRIC" id="fig|866777.3.peg.1455"/>
<dbReference type="HOGENOM" id="CLU_004542_4_1_11"/>
<dbReference type="GO" id="GO:0004553">
    <property type="term" value="F:hydrolase activity, hydrolyzing O-glycosyl compounds"/>
    <property type="evidence" value="ECO:0007669"/>
    <property type="project" value="InterPro"/>
</dbReference>
<dbReference type="GO" id="GO:0005975">
    <property type="term" value="P:carbohydrate metabolic process"/>
    <property type="evidence" value="ECO:0007669"/>
    <property type="project" value="InterPro"/>
</dbReference>
<dbReference type="FunFam" id="2.60.40.10:FF:000495">
    <property type="entry name" value="Periplasmic beta-glucosidase"/>
    <property type="match status" value="1"/>
</dbReference>
<dbReference type="Gene3D" id="3.40.50.1700">
    <property type="entry name" value="Glycoside hydrolase family 3 C-terminal domain"/>
    <property type="match status" value="1"/>
</dbReference>
<dbReference type="Gene3D" id="3.20.20.300">
    <property type="entry name" value="Glycoside hydrolase, family 3, N-terminal domain"/>
    <property type="match status" value="1"/>
</dbReference>
<dbReference type="Gene3D" id="2.60.40.10">
    <property type="entry name" value="Immunoglobulins"/>
    <property type="match status" value="1"/>
</dbReference>
<dbReference type="InterPro" id="IPR048100">
    <property type="entry name" value="Alph_arabinopyran"/>
</dbReference>
<dbReference type="InterPro" id="IPR050288">
    <property type="entry name" value="Cellulose_deg_GH3"/>
</dbReference>
<dbReference type="InterPro" id="IPR026891">
    <property type="entry name" value="Fn3-like"/>
</dbReference>
<dbReference type="InterPro" id="IPR019800">
    <property type="entry name" value="Glyco_hydro_3_AS"/>
</dbReference>
<dbReference type="InterPro" id="IPR002772">
    <property type="entry name" value="Glyco_hydro_3_C"/>
</dbReference>
<dbReference type="InterPro" id="IPR036881">
    <property type="entry name" value="Glyco_hydro_3_C_sf"/>
</dbReference>
<dbReference type="InterPro" id="IPR001764">
    <property type="entry name" value="Glyco_hydro_3_N"/>
</dbReference>
<dbReference type="InterPro" id="IPR036962">
    <property type="entry name" value="Glyco_hydro_3_N_sf"/>
</dbReference>
<dbReference type="InterPro" id="IPR017853">
    <property type="entry name" value="Glycoside_hydrolase_SF"/>
</dbReference>
<dbReference type="InterPro" id="IPR013783">
    <property type="entry name" value="Ig-like_fold"/>
</dbReference>
<dbReference type="NCBIfam" id="NF041610">
    <property type="entry name" value="alph_arabinopyran"/>
    <property type="match status" value="1"/>
</dbReference>
<dbReference type="PANTHER" id="PTHR42715">
    <property type="entry name" value="BETA-GLUCOSIDASE"/>
    <property type="match status" value="1"/>
</dbReference>
<dbReference type="PANTHER" id="PTHR42715:SF10">
    <property type="entry name" value="BETA-GLUCOSIDASE"/>
    <property type="match status" value="1"/>
</dbReference>
<dbReference type="Pfam" id="PF14310">
    <property type="entry name" value="Fn3-like"/>
    <property type="match status" value="1"/>
</dbReference>
<dbReference type="Pfam" id="PF00933">
    <property type="entry name" value="Glyco_hydro_3"/>
    <property type="match status" value="1"/>
</dbReference>
<dbReference type="Pfam" id="PF01915">
    <property type="entry name" value="Glyco_hydro_3_C"/>
    <property type="match status" value="1"/>
</dbReference>
<dbReference type="PRINTS" id="PR00133">
    <property type="entry name" value="GLHYDRLASE3"/>
</dbReference>
<dbReference type="SMART" id="SM01217">
    <property type="entry name" value="Fn3_like"/>
    <property type="match status" value="1"/>
</dbReference>
<dbReference type="SUPFAM" id="SSF51445">
    <property type="entry name" value="(Trans)glycosidases"/>
    <property type="match status" value="1"/>
</dbReference>
<dbReference type="SUPFAM" id="SSF52279">
    <property type="entry name" value="Beta-D-glucan exohydrolase, C-terminal domain"/>
    <property type="match status" value="1"/>
</dbReference>
<dbReference type="PROSITE" id="PS00775">
    <property type="entry name" value="GLYCOSYL_HYDROL_F3"/>
    <property type="match status" value="1"/>
</dbReference>
<reference key="1">
    <citation type="submission" date="2011-05" db="EMBL/GenBank/DDBJ databases">
        <title>Complete sequence of Bifidobacterium breves ACS-071-V-Sch8b.</title>
        <authorList>
            <person name="Durkin A.S."/>
            <person name="Kim M."/>
            <person name="Radune D."/>
            <person name="Hostetler J."/>
            <person name="Torralba M."/>
            <person name="Gillis M."/>
            <person name="Methe B."/>
            <person name="Sutton G."/>
            <person name="Nelson K.E."/>
        </authorList>
    </citation>
    <scope>NUCLEOTIDE SEQUENCE [LARGE SCALE GENOMIC DNA]</scope>
    <source>
        <strain>ACS-071-V-Sch8b</strain>
    </source>
</reference>
<reference key="2">
    <citation type="journal article" date="2003" name="Appl. Environ. Microbiol.">
        <title>Purification and characterization of alpha-L-arabinopyranosidase and alpha-L-arabinofuranosidase from Bifidobacterium breve K-110, a human intestinal anaerobic bacterium metabolizing ginsenoside Rb2 and Rc.</title>
        <authorList>
            <person name="Shin H.Y."/>
            <person name="Park S.Y."/>
            <person name="Sung J.H."/>
            <person name="Kim D.H."/>
        </authorList>
    </citation>
    <scope>FUNCTION</scope>
    <scope>ACTIVITY REGULATION</scope>
    <scope>BIOPHYSICOCHEMICAL PROPERTIES</scope>
    <scope>SUBSTRATE SPECIFICITY</scope>
    <scope>SUBUNIT</scope>
    <source>
        <strain>k-110</strain>
    </source>
</reference>
<evidence type="ECO:0000250" key="1"/>
<evidence type="ECO:0000269" key="2">
    <source>
    </source>
</evidence>
<evidence type="ECO:0000305" key="3"/>
<proteinExistence type="evidence at protein level"/>